<protein>
    <recommendedName>
        <fullName evidence="1">Multifunctional Ser/Thr-tRNA deacylase ProXp-y</fullName>
        <ecNumber evidence="1">3.1.1.-</ecNumber>
    </recommendedName>
    <alternativeName>
        <fullName evidence="1">Free-standing editing domain ProXp-y</fullName>
    </alternativeName>
    <alternativeName>
        <fullName evidence="1">Homologous trans-editing factor ProXp-y</fullName>
    </alternativeName>
    <alternativeName>
        <fullName evidence="1">ProXp-ST1</fullName>
    </alternativeName>
    <alternativeName>
        <fullName evidence="1">Prolyl-tRNA synthetase insertion domain homolog ProXp-y</fullName>
        <shortName evidence="1">ProRS INS domain homolog ProXp-y</shortName>
    </alternativeName>
</protein>
<dbReference type="EC" id="3.1.1.-" evidence="1"/>
<dbReference type="EMBL" id="AE005174">
    <property type="protein sequence ID" value="AAG56776.1"/>
    <property type="molecule type" value="Genomic_DNA"/>
</dbReference>
<dbReference type="EMBL" id="BA000007">
    <property type="protein sequence ID" value="BAB35919.1"/>
    <property type="molecule type" value="Genomic_DNA"/>
</dbReference>
<dbReference type="PIR" id="D85789">
    <property type="entry name" value="D85789"/>
</dbReference>
<dbReference type="PIR" id="H90940">
    <property type="entry name" value="H90940"/>
</dbReference>
<dbReference type="RefSeq" id="NP_310523.1">
    <property type="nucleotide sequence ID" value="NC_002695.1"/>
</dbReference>
<dbReference type="RefSeq" id="WP_000138043.1">
    <property type="nucleotide sequence ID" value="NZ_VOAI01000010.1"/>
</dbReference>
<dbReference type="SMR" id="P64484"/>
<dbReference type="STRING" id="155864.Z2827"/>
<dbReference type="GeneID" id="912573"/>
<dbReference type="KEGG" id="ece:Z2827"/>
<dbReference type="KEGG" id="ecs:ECs_2496"/>
<dbReference type="PATRIC" id="fig|386585.9.peg.2613"/>
<dbReference type="eggNOG" id="COG2606">
    <property type="taxonomic scope" value="Bacteria"/>
</dbReference>
<dbReference type="HOGENOM" id="CLU_094875_2_2_6"/>
<dbReference type="OMA" id="AKAMLCT"/>
<dbReference type="Proteomes" id="UP000000558">
    <property type="component" value="Chromosome"/>
</dbReference>
<dbReference type="Proteomes" id="UP000002519">
    <property type="component" value="Chromosome"/>
</dbReference>
<dbReference type="GO" id="GO:0005737">
    <property type="term" value="C:cytoplasm"/>
    <property type="evidence" value="ECO:0007669"/>
    <property type="project" value="UniProtKB-SubCell"/>
</dbReference>
<dbReference type="GO" id="GO:0002161">
    <property type="term" value="F:aminoacyl-tRNA deacylase activity"/>
    <property type="evidence" value="ECO:0007669"/>
    <property type="project" value="InterPro"/>
</dbReference>
<dbReference type="GO" id="GO:0016787">
    <property type="term" value="F:hydrolase activity"/>
    <property type="evidence" value="ECO:0007669"/>
    <property type="project" value="UniProtKB-KW"/>
</dbReference>
<dbReference type="GO" id="GO:0000049">
    <property type="term" value="F:tRNA binding"/>
    <property type="evidence" value="ECO:0007669"/>
    <property type="project" value="UniProtKB-KW"/>
</dbReference>
<dbReference type="CDD" id="cd04336">
    <property type="entry name" value="YeaK"/>
    <property type="match status" value="1"/>
</dbReference>
<dbReference type="FunFam" id="3.90.960.10:FF:000003">
    <property type="entry name" value="YbaK / prolyl-tRNA synthetases associated domain protein"/>
    <property type="match status" value="1"/>
</dbReference>
<dbReference type="Gene3D" id="3.90.960.10">
    <property type="entry name" value="YbaK/aminoacyl-tRNA synthetase-associated domain"/>
    <property type="match status" value="1"/>
</dbReference>
<dbReference type="InterPro" id="IPR044786">
    <property type="entry name" value="PROXY"/>
</dbReference>
<dbReference type="InterPro" id="IPR036754">
    <property type="entry name" value="YbaK/aa-tRNA-synt-asso_dom_sf"/>
</dbReference>
<dbReference type="InterPro" id="IPR007214">
    <property type="entry name" value="YbaK/aa-tRNA-synth-assoc-dom"/>
</dbReference>
<dbReference type="PANTHER" id="PTHR30411">
    <property type="entry name" value="CYTOPLASMIC PROTEIN"/>
    <property type="match status" value="1"/>
</dbReference>
<dbReference type="PANTHER" id="PTHR30411:SF9">
    <property type="entry name" value="MULTIFUNCTIONAL SER_THR-TRNA DEACYLASE PROXP-Y"/>
    <property type="match status" value="1"/>
</dbReference>
<dbReference type="Pfam" id="PF04073">
    <property type="entry name" value="tRNA_edit"/>
    <property type="match status" value="1"/>
</dbReference>
<dbReference type="SUPFAM" id="SSF55826">
    <property type="entry name" value="YbaK/ProRS associated domain"/>
    <property type="match status" value="1"/>
</dbReference>
<proteinExistence type="inferred from homology"/>
<accession>P64484</accession>
<accession>P76238</accession>
<organism>
    <name type="scientific">Escherichia coli O157:H7</name>
    <dbReference type="NCBI Taxonomy" id="83334"/>
    <lineage>
        <taxon>Bacteria</taxon>
        <taxon>Pseudomonadati</taxon>
        <taxon>Pseudomonadota</taxon>
        <taxon>Gammaproteobacteria</taxon>
        <taxon>Enterobacterales</taxon>
        <taxon>Enterobacteriaceae</taxon>
        <taxon>Escherichia</taxon>
    </lineage>
</organism>
<feature type="chain" id="PRO_0000169018" description="Multifunctional Ser/Thr-tRNA deacylase ProXp-y">
    <location>
        <begin position="1"/>
        <end position="167"/>
    </location>
</feature>
<name>PROXY_ECO57</name>
<gene>
    <name evidence="1" type="primary">proXp-y</name>
    <name evidence="2" type="synonym">yeaK</name>
    <name type="ordered locus">Z2827</name>
    <name type="ordered locus">ECs2496</name>
</gene>
<reference key="1">
    <citation type="journal article" date="2001" name="Nature">
        <title>Genome sequence of enterohaemorrhagic Escherichia coli O157:H7.</title>
        <authorList>
            <person name="Perna N.T."/>
            <person name="Plunkett G. III"/>
            <person name="Burland V."/>
            <person name="Mau B."/>
            <person name="Glasner J.D."/>
            <person name="Rose D.J."/>
            <person name="Mayhew G.F."/>
            <person name="Evans P.S."/>
            <person name="Gregor J."/>
            <person name="Kirkpatrick H.A."/>
            <person name="Posfai G."/>
            <person name="Hackett J."/>
            <person name="Klink S."/>
            <person name="Boutin A."/>
            <person name="Shao Y."/>
            <person name="Miller L."/>
            <person name="Grotbeck E.J."/>
            <person name="Davis N.W."/>
            <person name="Lim A."/>
            <person name="Dimalanta E.T."/>
            <person name="Potamousis K."/>
            <person name="Apodaca J."/>
            <person name="Anantharaman T.S."/>
            <person name="Lin J."/>
            <person name="Yen G."/>
            <person name="Schwartz D.C."/>
            <person name="Welch R.A."/>
            <person name="Blattner F.R."/>
        </authorList>
    </citation>
    <scope>NUCLEOTIDE SEQUENCE [LARGE SCALE GENOMIC DNA]</scope>
    <source>
        <strain>O157:H7 / EDL933 / ATCC 700927 / EHEC</strain>
    </source>
</reference>
<reference key="2">
    <citation type="journal article" date="2001" name="DNA Res.">
        <title>Complete genome sequence of enterohemorrhagic Escherichia coli O157:H7 and genomic comparison with a laboratory strain K-12.</title>
        <authorList>
            <person name="Hayashi T."/>
            <person name="Makino K."/>
            <person name="Ohnishi M."/>
            <person name="Kurokawa K."/>
            <person name="Ishii K."/>
            <person name="Yokoyama K."/>
            <person name="Han C.-G."/>
            <person name="Ohtsubo E."/>
            <person name="Nakayama K."/>
            <person name="Murata T."/>
            <person name="Tanaka M."/>
            <person name="Tobe T."/>
            <person name="Iida T."/>
            <person name="Takami H."/>
            <person name="Honda T."/>
            <person name="Sasakawa C."/>
            <person name="Ogasawara N."/>
            <person name="Yasunaga T."/>
            <person name="Kuhara S."/>
            <person name="Shiba T."/>
            <person name="Hattori M."/>
            <person name="Shinagawa H."/>
        </authorList>
    </citation>
    <scope>NUCLEOTIDE SEQUENCE [LARGE SCALE GENOMIC DNA]</scope>
    <source>
        <strain>O157:H7 / Sakai / RIMD 0509952 / EHEC</strain>
    </source>
</reference>
<keyword id="KW-0963">Cytoplasm</keyword>
<keyword id="KW-0378">Hydrolase</keyword>
<keyword id="KW-1185">Reference proteome</keyword>
<keyword id="KW-0694">RNA-binding</keyword>
<keyword id="KW-0820">tRNA-binding</keyword>
<comment type="function">
    <text evidence="1">An aminoacyl-tRNA editing enzyme that deacylates Ser-tRNA and/or Thr-tRNA mischarged by lysyl-tRNA synthetase (LysRS), threonyl-tRNA synthetase (ThrRS), seryl-tRNA synthetase (SerRS), alanyl-tRNA synthetase (AlaRS), valyl-tRNA synthetase (ValRS) and isoleucyl-tRNA synthetase (IleRS) in vitro. Also deacylates mischarged Hse-tRNA(Lys) and Hse-tRNA(Ser), and cognate Ser-tRNA(Ser) and Thr-tRNA(Thr) in vitro. The presence of cognate ThrRS abolishes the Thr-tRNA(Thr) deacylase activity, hence this activity is not applicable physiologically. Not able to remove the amino acid moiety from cognate Val-tRNA(Val), Ile-tRNA(Ile), Lys-tRNA(Lys), Ala-tRNA(Ala) or Pro-tRNA(Pro), or from incorrectly charged Ala-tRNA(Pro), Cys-tRNA(Pro) or Leu-tRNA(Pro) in vitro. May be required in vivo to prevent mistranslation and to maintain growth when the error prone stress-inducible lysyl-tRNA synthetase (LysU) is expressed under environmental pressure.</text>
</comment>
<comment type="catalytic activity">
    <reaction evidence="1">
        <text>L-seryl-tRNA(Lys) + H2O = tRNA(Lys) + L-serine</text>
        <dbReference type="Rhea" id="RHEA:74215"/>
        <dbReference type="Rhea" id="RHEA-COMP:9697"/>
        <dbReference type="Rhea" id="RHEA-COMP:18345"/>
        <dbReference type="ChEBI" id="CHEBI:15377"/>
        <dbReference type="ChEBI" id="CHEBI:33384"/>
        <dbReference type="ChEBI" id="CHEBI:78442"/>
        <dbReference type="ChEBI" id="CHEBI:78533"/>
    </reaction>
    <physiologicalReaction direction="left-to-right" evidence="1">
        <dbReference type="Rhea" id="RHEA:74216"/>
    </physiologicalReaction>
</comment>
<comment type="catalytic activity">
    <reaction evidence="1">
        <text>L-threonyl-tRNA(Lys) + H2O = tRNA(Lys) + L-threonine</text>
        <dbReference type="Rhea" id="RHEA:74211"/>
        <dbReference type="Rhea" id="RHEA-COMP:9697"/>
        <dbReference type="Rhea" id="RHEA-COMP:18344"/>
        <dbReference type="ChEBI" id="CHEBI:15377"/>
        <dbReference type="ChEBI" id="CHEBI:57926"/>
        <dbReference type="ChEBI" id="CHEBI:78442"/>
        <dbReference type="ChEBI" id="CHEBI:78534"/>
    </reaction>
    <physiologicalReaction direction="left-to-right" evidence="1">
        <dbReference type="Rhea" id="RHEA:74212"/>
    </physiologicalReaction>
</comment>
<comment type="catalytic activity">
    <reaction evidence="1">
        <text>L-homoseryl-tRNA(Lys) + H2O = tRNA(Lys) + L-homoserine + H(+)</text>
        <dbReference type="Rhea" id="RHEA:74259"/>
        <dbReference type="Rhea" id="RHEA-COMP:9697"/>
        <dbReference type="Rhea" id="RHEA-COMP:18356"/>
        <dbReference type="ChEBI" id="CHEBI:15377"/>
        <dbReference type="ChEBI" id="CHEBI:15378"/>
        <dbReference type="ChEBI" id="CHEBI:57476"/>
        <dbReference type="ChEBI" id="CHEBI:78442"/>
        <dbReference type="ChEBI" id="CHEBI:193130"/>
    </reaction>
    <physiologicalReaction direction="left-to-right" evidence="1">
        <dbReference type="Rhea" id="RHEA:74260"/>
    </physiologicalReaction>
</comment>
<comment type="catalytic activity">
    <reaction evidence="1">
        <text>L-seryl-tRNA(Ala) + H2O = tRNA(Ala) + L-serine</text>
        <dbReference type="Rhea" id="RHEA:74223"/>
        <dbReference type="Rhea" id="RHEA-COMP:9657"/>
        <dbReference type="Rhea" id="RHEA-COMP:18347"/>
        <dbReference type="ChEBI" id="CHEBI:15377"/>
        <dbReference type="ChEBI" id="CHEBI:33384"/>
        <dbReference type="ChEBI" id="CHEBI:78442"/>
        <dbReference type="ChEBI" id="CHEBI:78533"/>
    </reaction>
    <physiologicalReaction direction="left-to-right" evidence="1">
        <dbReference type="Rhea" id="RHEA:74224"/>
    </physiologicalReaction>
</comment>
<comment type="catalytic activity">
    <reaction evidence="1">
        <text>L-homoseryl-tRNA(Ser) + H2O = tRNA(Ser) + L-homoserine + H(+)</text>
        <dbReference type="Rhea" id="RHEA:74255"/>
        <dbReference type="Rhea" id="RHEA-COMP:9669"/>
        <dbReference type="Rhea" id="RHEA-COMP:18355"/>
        <dbReference type="ChEBI" id="CHEBI:15377"/>
        <dbReference type="ChEBI" id="CHEBI:15378"/>
        <dbReference type="ChEBI" id="CHEBI:57476"/>
        <dbReference type="ChEBI" id="CHEBI:78442"/>
        <dbReference type="ChEBI" id="CHEBI:193130"/>
    </reaction>
    <physiologicalReaction direction="left-to-right" evidence="1">
        <dbReference type="Rhea" id="RHEA:74256"/>
    </physiologicalReaction>
</comment>
<comment type="catalytic activity">
    <reaction evidence="1">
        <text>L-seryl-tRNA(Thr) + H2O = tRNA(Thr) + L-serine</text>
        <dbReference type="Rhea" id="RHEA:74219"/>
        <dbReference type="Rhea" id="RHEA-COMP:9670"/>
        <dbReference type="Rhea" id="RHEA-COMP:18346"/>
        <dbReference type="ChEBI" id="CHEBI:15377"/>
        <dbReference type="ChEBI" id="CHEBI:33384"/>
        <dbReference type="ChEBI" id="CHEBI:78442"/>
        <dbReference type="ChEBI" id="CHEBI:78533"/>
    </reaction>
    <physiologicalReaction direction="left-to-right" evidence="1">
        <dbReference type="Rhea" id="RHEA:74220"/>
    </physiologicalReaction>
</comment>
<comment type="catalytic activity">
    <reaction evidence="1">
        <text>L-threonyl-tRNA(Ile) + H2O = tRNA(Ile) + L-threonine</text>
        <dbReference type="Rhea" id="RHEA:74227"/>
        <dbReference type="Rhea" id="RHEA-COMP:9666"/>
        <dbReference type="Rhea" id="RHEA-COMP:18348"/>
        <dbReference type="ChEBI" id="CHEBI:15377"/>
        <dbReference type="ChEBI" id="CHEBI:57926"/>
        <dbReference type="ChEBI" id="CHEBI:78442"/>
        <dbReference type="ChEBI" id="CHEBI:78534"/>
    </reaction>
    <physiologicalReaction direction="left-to-right" evidence="1">
        <dbReference type="Rhea" id="RHEA:74228"/>
    </physiologicalReaction>
</comment>
<comment type="catalytic activity">
    <reaction evidence="1">
        <text>L-threonyl-tRNA(Val) + H2O = tRNA(Val) + L-threonine</text>
        <dbReference type="Rhea" id="RHEA:74231"/>
        <dbReference type="Rhea" id="RHEA-COMP:9672"/>
        <dbReference type="Rhea" id="RHEA-COMP:18349"/>
        <dbReference type="ChEBI" id="CHEBI:15377"/>
        <dbReference type="ChEBI" id="CHEBI:57926"/>
        <dbReference type="ChEBI" id="CHEBI:78442"/>
        <dbReference type="ChEBI" id="CHEBI:78534"/>
    </reaction>
    <physiologicalReaction direction="left-to-right" evidence="1">
        <dbReference type="Rhea" id="RHEA:74232"/>
    </physiologicalReaction>
</comment>
<comment type="catalytic activity">
    <reaction evidence="1">
        <text>L-threonyl-tRNA(Ser) + H2O = tRNA(Ser) + L-threonine</text>
        <dbReference type="Rhea" id="RHEA:74235"/>
        <dbReference type="Rhea" id="RHEA-COMP:9669"/>
        <dbReference type="Rhea" id="RHEA-COMP:18350"/>
        <dbReference type="ChEBI" id="CHEBI:15377"/>
        <dbReference type="ChEBI" id="CHEBI:57926"/>
        <dbReference type="ChEBI" id="CHEBI:78442"/>
        <dbReference type="ChEBI" id="CHEBI:78534"/>
    </reaction>
    <physiologicalReaction direction="left-to-right" evidence="1">
        <dbReference type="Rhea" id="RHEA:74236"/>
    </physiologicalReaction>
</comment>
<comment type="subcellular location">
    <subcellularLocation>
        <location evidence="2">Cytoplasm</location>
    </subcellularLocation>
</comment>
<sequence length="167" mass="17851">MTEMAKGSVTHQRLIALLSQEGADFRVVTHEAVGKCEAVSEIRGTALGQGAKALVCKVKGNGVNQHVLAILAADQQADLSQLASHIGGLRASLASPAEVDELTGCVFGAIPPFSFHPKLKLVADPLLFERFDEIAFNAGMLDKSVILKTADYLRIAQPELVNFRRTA</sequence>
<evidence type="ECO:0000250" key="1">
    <source>
        <dbReference type="UniProtKB" id="P64483"/>
    </source>
</evidence>
<evidence type="ECO:0000305" key="2"/>